<name>DADA_SALSV</name>
<comment type="function">
    <text evidence="1">Oxidative deamination of D-amino acids.</text>
</comment>
<comment type="catalytic activity">
    <reaction evidence="1">
        <text>a D-alpha-amino acid + A + H2O = a 2-oxocarboxylate + AH2 + NH4(+)</text>
        <dbReference type="Rhea" id="RHEA:18125"/>
        <dbReference type="ChEBI" id="CHEBI:13193"/>
        <dbReference type="ChEBI" id="CHEBI:15377"/>
        <dbReference type="ChEBI" id="CHEBI:17499"/>
        <dbReference type="ChEBI" id="CHEBI:28938"/>
        <dbReference type="ChEBI" id="CHEBI:35179"/>
        <dbReference type="ChEBI" id="CHEBI:59871"/>
    </reaction>
</comment>
<comment type="cofactor">
    <cofactor evidence="1">
        <name>FAD</name>
        <dbReference type="ChEBI" id="CHEBI:57692"/>
    </cofactor>
</comment>
<comment type="pathway">
    <text>Amino-acid degradation; D-alanine degradation; NH(3) and pyruvate from D-alanine: step 1/1.</text>
</comment>
<comment type="similarity">
    <text evidence="1">Belongs to the DadA oxidoreductase family.</text>
</comment>
<dbReference type="EC" id="1.4.99.-" evidence="1"/>
<dbReference type="EMBL" id="CP001127">
    <property type="protein sequence ID" value="ACF91807.1"/>
    <property type="molecule type" value="Genomic_DNA"/>
</dbReference>
<dbReference type="RefSeq" id="WP_001266935.1">
    <property type="nucleotide sequence ID" value="NC_011094.1"/>
</dbReference>
<dbReference type="SMR" id="B4TXX3"/>
<dbReference type="KEGG" id="sew:SeSA_A1945"/>
<dbReference type="HOGENOM" id="CLU_007884_9_2_6"/>
<dbReference type="UniPathway" id="UPA00043">
    <property type="reaction ID" value="UER00498"/>
</dbReference>
<dbReference type="Proteomes" id="UP000001865">
    <property type="component" value="Chromosome"/>
</dbReference>
<dbReference type="GO" id="GO:0005737">
    <property type="term" value="C:cytoplasm"/>
    <property type="evidence" value="ECO:0007669"/>
    <property type="project" value="TreeGrafter"/>
</dbReference>
<dbReference type="GO" id="GO:0005886">
    <property type="term" value="C:plasma membrane"/>
    <property type="evidence" value="ECO:0007669"/>
    <property type="project" value="TreeGrafter"/>
</dbReference>
<dbReference type="GO" id="GO:0008718">
    <property type="term" value="F:D-amino-acid dehydrogenase activity"/>
    <property type="evidence" value="ECO:0007669"/>
    <property type="project" value="UniProtKB-UniRule"/>
</dbReference>
<dbReference type="GO" id="GO:0055130">
    <property type="term" value="P:D-alanine catabolic process"/>
    <property type="evidence" value="ECO:0007669"/>
    <property type="project" value="UniProtKB-UniPathway"/>
</dbReference>
<dbReference type="FunFam" id="3.50.50.60:FF:000020">
    <property type="entry name" value="D-amino acid dehydrogenase"/>
    <property type="match status" value="1"/>
</dbReference>
<dbReference type="Gene3D" id="3.30.9.10">
    <property type="entry name" value="D-Amino Acid Oxidase, subunit A, domain 2"/>
    <property type="match status" value="1"/>
</dbReference>
<dbReference type="Gene3D" id="3.50.50.60">
    <property type="entry name" value="FAD/NAD(P)-binding domain"/>
    <property type="match status" value="2"/>
</dbReference>
<dbReference type="HAMAP" id="MF_01202">
    <property type="entry name" value="DadA"/>
    <property type="match status" value="1"/>
</dbReference>
<dbReference type="InterPro" id="IPR023080">
    <property type="entry name" value="DadA"/>
</dbReference>
<dbReference type="InterPro" id="IPR006076">
    <property type="entry name" value="FAD-dep_OxRdtase"/>
</dbReference>
<dbReference type="InterPro" id="IPR036188">
    <property type="entry name" value="FAD/NAD-bd_sf"/>
</dbReference>
<dbReference type="NCBIfam" id="NF001933">
    <property type="entry name" value="PRK00711.1"/>
    <property type="match status" value="1"/>
</dbReference>
<dbReference type="PANTHER" id="PTHR13847:SF280">
    <property type="entry name" value="D-AMINO ACID DEHYDROGENASE"/>
    <property type="match status" value="1"/>
</dbReference>
<dbReference type="PANTHER" id="PTHR13847">
    <property type="entry name" value="SARCOSINE DEHYDROGENASE-RELATED"/>
    <property type="match status" value="1"/>
</dbReference>
<dbReference type="Pfam" id="PF01266">
    <property type="entry name" value="DAO"/>
    <property type="match status" value="1"/>
</dbReference>
<dbReference type="SUPFAM" id="SSF54373">
    <property type="entry name" value="FAD-linked reductases, C-terminal domain"/>
    <property type="match status" value="1"/>
</dbReference>
<dbReference type="SUPFAM" id="SSF51905">
    <property type="entry name" value="FAD/NAD(P)-binding domain"/>
    <property type="match status" value="1"/>
</dbReference>
<gene>
    <name evidence="1" type="primary">dadA</name>
    <name type="ordered locus">SeSA_A1945</name>
</gene>
<feature type="chain" id="PRO_1000138669" description="D-amino acid dehydrogenase">
    <location>
        <begin position="1"/>
        <end position="432"/>
    </location>
</feature>
<feature type="binding site" evidence="1">
    <location>
        <begin position="3"/>
        <end position="17"/>
    </location>
    <ligand>
        <name>FAD</name>
        <dbReference type="ChEBI" id="CHEBI:57692"/>
    </ligand>
</feature>
<organism>
    <name type="scientific">Salmonella schwarzengrund (strain CVM19633)</name>
    <dbReference type="NCBI Taxonomy" id="439843"/>
    <lineage>
        <taxon>Bacteria</taxon>
        <taxon>Pseudomonadati</taxon>
        <taxon>Pseudomonadota</taxon>
        <taxon>Gammaproteobacteria</taxon>
        <taxon>Enterobacterales</taxon>
        <taxon>Enterobacteriaceae</taxon>
        <taxon>Salmonella</taxon>
    </lineage>
</organism>
<evidence type="ECO:0000255" key="1">
    <source>
        <dbReference type="HAMAP-Rule" id="MF_01202"/>
    </source>
</evidence>
<accession>B4TXX3</accession>
<protein>
    <recommendedName>
        <fullName evidence="1">D-amino acid dehydrogenase</fullName>
        <ecNumber evidence="1">1.4.99.-</ecNumber>
    </recommendedName>
</protein>
<sequence>MRVVILGSGVVGVTSAWYLSQAGHDVTVIDRESGPAQETSAANAGQISPGYAAPWAAPGVPLKAIKWMFQRHAPLAVRLDGTPFQLKWMWQMLRNCDTRHYMENKGRMVRLAEYSRDCLKTLRAATGIEYEGRQGGTLQLFRTAQQYENATRDIAVLEDAGVPYQLLEASRLAEVEPALAEVAHKLTGGLRLPNDETGDCQLFTQRLARMAEQAGVTFRFNTPVEKLLYENDQIYGVKCADEIIKADAYVMAFGSYSTAMLKGIVDIPVYPLKGYSLTIPIVEPDGAPVSTILDETYKIAITRFDKRIRVGGMAEIVGFNTDLLQPRRETLEMVVRDLFPRGGHIEQATFWTGLRPMTPDGTPVVGRTRYKNLWLNTGHGTLGWTMACGSGQLLSDILSGRTPAIPYDDLSVARYRSDFTPTRPQRLHSAHN</sequence>
<reference key="1">
    <citation type="journal article" date="2011" name="J. Bacteriol.">
        <title>Comparative genomics of 28 Salmonella enterica isolates: evidence for CRISPR-mediated adaptive sublineage evolution.</title>
        <authorList>
            <person name="Fricke W.F."/>
            <person name="Mammel M.K."/>
            <person name="McDermott P.F."/>
            <person name="Tartera C."/>
            <person name="White D.G."/>
            <person name="Leclerc J.E."/>
            <person name="Ravel J."/>
            <person name="Cebula T.A."/>
        </authorList>
    </citation>
    <scope>NUCLEOTIDE SEQUENCE [LARGE SCALE GENOMIC DNA]</scope>
    <source>
        <strain>CVM19633</strain>
    </source>
</reference>
<proteinExistence type="inferred from homology"/>
<keyword id="KW-0274">FAD</keyword>
<keyword id="KW-0285">Flavoprotein</keyword>
<keyword id="KW-0560">Oxidoreductase</keyword>